<evidence type="ECO:0000255" key="1">
    <source>
        <dbReference type="HAMAP-Rule" id="MF_00363"/>
    </source>
</evidence>
<comment type="subcellular location">
    <subcellularLocation>
        <location evidence="1">Membrane</location>
        <topology evidence="1">Single-pass membrane protein</topology>
    </subcellularLocation>
</comment>
<comment type="similarity">
    <text evidence="1">Belongs to the UPF0154 family.</text>
</comment>
<organism>
    <name type="scientific">Mycoplasmoides gallisepticum (strain R(low / passage 15 / clone 2))</name>
    <name type="common">Mycoplasma gallisepticum</name>
    <dbReference type="NCBI Taxonomy" id="710127"/>
    <lineage>
        <taxon>Bacteria</taxon>
        <taxon>Bacillati</taxon>
        <taxon>Mycoplasmatota</taxon>
        <taxon>Mycoplasmoidales</taxon>
        <taxon>Mycoplasmoidaceae</taxon>
        <taxon>Mycoplasmoides</taxon>
    </lineage>
</organism>
<proteinExistence type="inferred from homology"/>
<accession>Q7NAR5</accession>
<keyword id="KW-0472">Membrane</keyword>
<keyword id="KW-1185">Reference proteome</keyword>
<keyword id="KW-0812">Transmembrane</keyword>
<keyword id="KW-1133">Transmembrane helix</keyword>
<protein>
    <recommendedName>
        <fullName evidence="1">UPF0154 protein MYCGA5700</fullName>
    </recommendedName>
</protein>
<feature type="chain" id="PRO_0000214967" description="UPF0154 protein MYCGA5700">
    <location>
        <begin position="1"/>
        <end position="73"/>
    </location>
</feature>
<feature type="transmembrane region" description="Helical" evidence="1">
    <location>
        <begin position="5"/>
        <end position="25"/>
    </location>
</feature>
<sequence length="73" mass="8251">MVLGLALGLSIPLCLIVGAFVGYFVSMKVFKRQMRKNPPITEAQIRSLYAQMGRKPSEAQVKQMMRAYTKETK</sequence>
<reference key="1">
    <citation type="journal article" date="2003" name="Microbiology">
        <title>The complete genome sequence of the avian pathogen Mycoplasma gallisepticum strain R(low).</title>
        <authorList>
            <person name="Papazisi L."/>
            <person name="Gorton T.S."/>
            <person name="Kutish G."/>
            <person name="Markham P.F."/>
            <person name="Browning G.F."/>
            <person name="Nguyen D.K."/>
            <person name="Swartzell S."/>
            <person name="Madan A."/>
            <person name="Mahairas G."/>
            <person name="Geary S.J."/>
        </authorList>
    </citation>
    <scope>NUCLEOTIDE SEQUENCE [LARGE SCALE GENOMIC DNA]</scope>
    <source>
        <strain>R(low / passage 15 / clone 2)</strain>
    </source>
</reference>
<gene>
    <name type="ordered locus">MYCGA5700</name>
    <name type="ORF">MGA_0340</name>
</gene>
<name>Y570_MYCGA</name>
<dbReference type="EMBL" id="AE015450">
    <property type="protein sequence ID" value="AAP56920.1"/>
    <property type="molecule type" value="Genomic_DNA"/>
</dbReference>
<dbReference type="RefSeq" id="WP_011113827.1">
    <property type="nucleotide sequence ID" value="NC_004829.2"/>
</dbReference>
<dbReference type="SMR" id="Q7NAR5"/>
<dbReference type="KEGG" id="mga:MGA_0340"/>
<dbReference type="HOGENOM" id="CLU_180108_1_0_14"/>
<dbReference type="OrthoDB" id="1769076at2"/>
<dbReference type="Proteomes" id="UP000001418">
    <property type="component" value="Chromosome"/>
</dbReference>
<dbReference type="GO" id="GO:0016020">
    <property type="term" value="C:membrane"/>
    <property type="evidence" value="ECO:0007669"/>
    <property type="project" value="UniProtKB-SubCell"/>
</dbReference>
<dbReference type="HAMAP" id="MF_00363">
    <property type="entry name" value="UPF0154"/>
    <property type="match status" value="1"/>
</dbReference>
<dbReference type="InterPro" id="IPR005359">
    <property type="entry name" value="UPF0154"/>
</dbReference>
<dbReference type="Pfam" id="PF03672">
    <property type="entry name" value="UPF0154"/>
    <property type="match status" value="1"/>
</dbReference>